<organism>
    <name type="scientific">Escherichia coli O6:H1 (strain CFT073 / ATCC 700928 / UPEC)</name>
    <dbReference type="NCBI Taxonomy" id="199310"/>
    <lineage>
        <taxon>Bacteria</taxon>
        <taxon>Pseudomonadati</taxon>
        <taxon>Pseudomonadota</taxon>
        <taxon>Gammaproteobacteria</taxon>
        <taxon>Enterobacterales</taxon>
        <taxon>Enterobacteriaceae</taxon>
        <taxon>Escherichia</taxon>
    </lineage>
</organism>
<dbReference type="EMBL" id="AE014075">
    <property type="protein sequence ID" value="AAN83315.1"/>
    <property type="molecule type" value="Genomic_DNA"/>
</dbReference>
<dbReference type="RefSeq" id="WP_000644904.1">
    <property type="nucleotide sequence ID" value="NZ_CP051263.1"/>
</dbReference>
<dbReference type="BMRB" id="P0ACN8"/>
<dbReference type="SMR" id="P0ACN8"/>
<dbReference type="STRING" id="199310.c4887"/>
<dbReference type="GeneID" id="93777964"/>
<dbReference type="KEGG" id="ecc:c4887"/>
<dbReference type="eggNOG" id="COG1609">
    <property type="taxonomic scope" value="Bacteria"/>
</dbReference>
<dbReference type="HOGENOM" id="CLU_037628_6_0_6"/>
<dbReference type="BioCyc" id="ECOL199310:C4887-MONOMER"/>
<dbReference type="PHI-base" id="PHI:9604"/>
<dbReference type="Proteomes" id="UP000001410">
    <property type="component" value="Chromosome"/>
</dbReference>
<dbReference type="GO" id="GO:0003700">
    <property type="term" value="F:DNA-binding transcription factor activity"/>
    <property type="evidence" value="ECO:0007669"/>
    <property type="project" value="TreeGrafter"/>
</dbReference>
<dbReference type="GO" id="GO:0000976">
    <property type="term" value="F:transcription cis-regulatory region binding"/>
    <property type="evidence" value="ECO:0007669"/>
    <property type="project" value="TreeGrafter"/>
</dbReference>
<dbReference type="CDD" id="cd01392">
    <property type="entry name" value="HTH_LacI"/>
    <property type="match status" value="1"/>
</dbReference>
<dbReference type="CDD" id="cd06284">
    <property type="entry name" value="PBP1_LacI-like"/>
    <property type="match status" value="1"/>
</dbReference>
<dbReference type="FunFam" id="1.10.260.40:FF:000012">
    <property type="entry name" value="HTH-type transcriptional regulator GntR"/>
    <property type="match status" value="1"/>
</dbReference>
<dbReference type="FunFam" id="3.40.50.2300:FF:000116">
    <property type="entry name" value="HTH-type transcriptional repressor CytR"/>
    <property type="match status" value="1"/>
</dbReference>
<dbReference type="Gene3D" id="3.40.50.2300">
    <property type="match status" value="2"/>
</dbReference>
<dbReference type="Gene3D" id="1.10.260.40">
    <property type="entry name" value="lambda repressor-like DNA-binding domains"/>
    <property type="match status" value="1"/>
</dbReference>
<dbReference type="InterPro" id="IPR000843">
    <property type="entry name" value="HTH_LacI"/>
</dbReference>
<dbReference type="InterPro" id="IPR046335">
    <property type="entry name" value="LacI/GalR-like_sensor"/>
</dbReference>
<dbReference type="InterPro" id="IPR010982">
    <property type="entry name" value="Lambda_DNA-bd_dom_sf"/>
</dbReference>
<dbReference type="InterPro" id="IPR028082">
    <property type="entry name" value="Peripla_BP_I"/>
</dbReference>
<dbReference type="NCBIfam" id="NF008269">
    <property type="entry name" value="PRK11041.1"/>
    <property type="match status" value="1"/>
</dbReference>
<dbReference type="PANTHER" id="PTHR30146:SF151">
    <property type="entry name" value="HTH-TYPE TRANSCRIPTIONAL REPRESSOR CYTR"/>
    <property type="match status" value="1"/>
</dbReference>
<dbReference type="PANTHER" id="PTHR30146">
    <property type="entry name" value="LACI-RELATED TRANSCRIPTIONAL REPRESSOR"/>
    <property type="match status" value="1"/>
</dbReference>
<dbReference type="Pfam" id="PF00356">
    <property type="entry name" value="LacI"/>
    <property type="match status" value="1"/>
</dbReference>
<dbReference type="Pfam" id="PF13377">
    <property type="entry name" value="Peripla_BP_3"/>
    <property type="match status" value="1"/>
</dbReference>
<dbReference type="SMART" id="SM00354">
    <property type="entry name" value="HTH_LACI"/>
    <property type="match status" value="1"/>
</dbReference>
<dbReference type="SUPFAM" id="SSF47413">
    <property type="entry name" value="lambda repressor-like DNA-binding domains"/>
    <property type="match status" value="1"/>
</dbReference>
<dbReference type="SUPFAM" id="SSF53822">
    <property type="entry name" value="Periplasmic binding protein-like I"/>
    <property type="match status" value="1"/>
</dbReference>
<dbReference type="PROSITE" id="PS00356">
    <property type="entry name" value="HTH_LACI_1"/>
    <property type="match status" value="1"/>
</dbReference>
<dbReference type="PROSITE" id="PS50932">
    <property type="entry name" value="HTH_LACI_2"/>
    <property type="match status" value="1"/>
</dbReference>
<accession>P0ACN8</accession>
<accession>P06964</accession>
<protein>
    <recommendedName>
        <fullName>HTH-type transcriptional repressor CytR</fullName>
    </recommendedName>
</protein>
<comment type="function">
    <text evidence="1">This protein negatively controls the transcription initiation of genes such as deoCABD, udp, and cdd encoding catabolizing enzymes and nupC, nupG, and tsx encoding transporting and pore-forming proteins. Binds cytidine and adenosine as effectors (By similarity).</text>
</comment>
<reference key="1">
    <citation type="journal article" date="2002" name="Proc. Natl. Acad. Sci. U.S.A.">
        <title>Extensive mosaic structure revealed by the complete genome sequence of uropathogenic Escherichia coli.</title>
        <authorList>
            <person name="Welch R.A."/>
            <person name="Burland V."/>
            <person name="Plunkett G. III"/>
            <person name="Redford P."/>
            <person name="Roesch P."/>
            <person name="Rasko D."/>
            <person name="Buckles E.L."/>
            <person name="Liou S.-R."/>
            <person name="Boutin A."/>
            <person name="Hackett J."/>
            <person name="Stroud D."/>
            <person name="Mayhew G.F."/>
            <person name="Rose D.J."/>
            <person name="Zhou S."/>
            <person name="Schwartz D.C."/>
            <person name="Perna N.T."/>
            <person name="Mobley H.L.T."/>
            <person name="Donnenberg M.S."/>
            <person name="Blattner F.R."/>
        </authorList>
    </citation>
    <scope>NUCLEOTIDE SEQUENCE [LARGE SCALE GENOMIC DNA]</scope>
    <source>
        <strain>CFT073 / ATCC 700928 / UPEC</strain>
    </source>
</reference>
<keyword id="KW-0238">DNA-binding</keyword>
<keyword id="KW-1185">Reference proteome</keyword>
<keyword id="KW-0678">Repressor</keyword>
<keyword id="KW-0804">Transcription</keyword>
<keyword id="KW-0805">Transcription regulation</keyword>
<sequence>MKAKKQETAATMKDVALKAKVSTATVSRALMNPDKVSQATRNRVEKAAREVGYLPQPMGRNVKRNESRTILVIVPDICDPFFSEIIRGIEVTAANHGYLVLIGDCAHQNQQEKTFIDLIITKQIDGMLLLGSRLPFDASIEEQRNLPPMVMANEFAPELELPTVHIDNLTAAFDAVNYLYEQGHKRIGCIAGPEEMPLCHYRLQGYVQALRRCGIMVDPQYIARGDFTFEAGSKAMQQLLDLPQPPTAVFCHSDVMALGALSQAKRQGLKVPEDLSIIGFDNIDLTQFCDPPLTTIAQPRYEIGREAMLLLLDQMQGQHVGSGSRLMDCELIIRGSTRALP</sequence>
<proteinExistence type="inferred from homology"/>
<evidence type="ECO:0000250" key="1"/>
<evidence type="ECO:0000255" key="2">
    <source>
        <dbReference type="PROSITE-ProRule" id="PRU00111"/>
    </source>
</evidence>
<name>CYTR_ECOL6</name>
<feature type="chain" id="PRO_0000107940" description="HTH-type transcriptional repressor CytR">
    <location>
        <begin position="1"/>
        <end position="341"/>
    </location>
</feature>
<feature type="domain" description="HTH lacI-type" evidence="2">
    <location>
        <begin position="10"/>
        <end position="64"/>
    </location>
</feature>
<feature type="DNA-binding region" description="H-T-H motif" evidence="2">
    <location>
        <begin position="12"/>
        <end position="31"/>
    </location>
</feature>
<gene>
    <name type="primary">cytR</name>
    <name type="ordered locus">c4887</name>
</gene>